<evidence type="ECO:0000250" key="1"/>
<evidence type="ECO:0000250" key="2">
    <source>
        <dbReference type="UniProtKB" id="P16753"/>
    </source>
</evidence>
<evidence type="ECO:0000255" key="3">
    <source>
        <dbReference type="HAMAP-Rule" id="MF_04008"/>
    </source>
</evidence>
<evidence type="ECO:0000256" key="4">
    <source>
        <dbReference type="SAM" id="MobiDB-lite"/>
    </source>
</evidence>
<evidence type="ECO:0000305" key="5"/>
<proteinExistence type="inferred from homology"/>
<organism>
    <name type="scientific">Human herpesvirus 7 (strain JI)</name>
    <name type="common">HHV-7</name>
    <name type="synonym">Human T lymphotropic virus</name>
    <dbReference type="NCBI Taxonomy" id="57278"/>
    <lineage>
        <taxon>Viruses</taxon>
        <taxon>Duplodnaviria</taxon>
        <taxon>Heunggongvirae</taxon>
        <taxon>Peploviricota</taxon>
        <taxon>Herviviricetes</taxon>
        <taxon>Herpesvirales</taxon>
        <taxon>Orthoherpesviridae</taxon>
        <taxon>Betaherpesvirinae</taxon>
        <taxon>Roseolovirus</taxon>
        <taxon>Roseolovirus humanbeta7</taxon>
        <taxon>Human betaherpesvirus 7</taxon>
    </lineage>
</organism>
<organismHost>
    <name type="scientific">Homo sapiens</name>
    <name type="common">Human</name>
    <dbReference type="NCBI Taxonomy" id="9606"/>
</organismHost>
<sequence>METVLVAGFLCVYDDNDINDNFYLPRRTIQEEINSGNGLNIPLNINHNENAVIGTVSSLSVYSTVCFVARVQSKEFLTIIKKIAAKSKLITNTEEKTLPPDPEIECLNSIFPGLSLSNRVGGNERDPFFKHVSICGVGRRPGTIAIFGRNLNWILDRFSSITEAEKEKILSTDQSCVQFFAEEQFKVDLYDLLADSLDTSYIKVRFPKLQSDKQLSGISKSTYIKASENLTANNHTINVNSKVTKETEATDSVSQDDCAVHAPDLISTICSTTHTTHHDLVRMNGSATGNSASLPAPQFSECVFLPKDTFCSLLNATAGAQNKNVTPAAPIFKTDEYITPYPESLSRVDYGNRMNYHIPPPYWYPSMPGFNYKSYRGSQKRCAPTDSDDEMSFPGDPDYTTKKKKRYREDDDRELTKDKNDIKELVDAIGMLRHEISALKYIRSQSPQRQHCTAVDTMPTIEEKNVASPKPSVVNASLTPGQDRNQNLMQSDQSLLSLNKKLFVEALNKMDN</sequence>
<name>SCAF_HHV7J</name>
<feature type="chain" id="PRO_0000376802" description="Capsid scaffolding protein">
    <location>
        <begin position="1"/>
        <end position="512"/>
    </location>
</feature>
<feature type="chain" id="PRO_0000027267" description="Assemblin" evidence="3">
    <location>
        <begin position="1"/>
        <end position="226"/>
    </location>
</feature>
<feature type="chain" id="PRO_0000027268" description="Assembly protein" evidence="3">
    <location>
        <begin position="227"/>
        <end position="512"/>
    </location>
</feature>
<feature type="region of interest" description="Interaction with pAP" evidence="3">
    <location>
        <begin position="264"/>
        <end position="282"/>
    </location>
</feature>
<feature type="region of interest" description="Disordered" evidence="4">
    <location>
        <begin position="376"/>
        <end position="407"/>
    </location>
</feature>
<feature type="region of interest" description="Interaction with major capsid protein" evidence="3">
    <location>
        <begin position="492"/>
        <end position="512"/>
    </location>
</feature>
<feature type="short sequence motif" description="Nuclear localization signal" evidence="1">
    <location>
        <begin position="402"/>
        <end position="408"/>
    </location>
</feature>
<feature type="active site" description="Charge relay system" evidence="3">
    <location>
        <position position="47"/>
    </location>
</feature>
<feature type="active site" description="Charge relay system" evidence="3">
    <location>
        <position position="115"/>
    </location>
</feature>
<feature type="active site" description="Charge relay system" evidence="3">
    <location>
        <position position="131"/>
    </location>
</feature>
<feature type="site" description="Cleavage; by assemblin; Release site" evidence="3">
    <location>
        <begin position="226"/>
        <end position="227"/>
    </location>
</feature>
<feature type="site" description="Cleavage; by assemblin; Maturation site" evidence="2">
    <location>
        <begin position="476"/>
        <end position="477"/>
    </location>
</feature>
<feature type="splice variant" id="VSP_037419" description="In isoform pAP." evidence="5">
    <location>
        <begin position="1"/>
        <end position="282"/>
    </location>
</feature>
<protein>
    <recommendedName>
        <fullName evidence="3">Capsid scaffolding protein</fullName>
    </recommendedName>
    <alternativeName>
        <fullName>Capsid protein P40</fullName>
    </alternativeName>
    <alternativeName>
        <fullName evidence="3">Protease precursor</fullName>
        <shortName evidence="3">pPR</shortName>
    </alternativeName>
    <component>
        <recommendedName>
            <fullName evidence="3">Assemblin</fullName>
            <ecNumber evidence="3">3.4.21.97</ecNumber>
        </recommendedName>
        <alternativeName>
            <fullName evidence="3">Protease</fullName>
            <shortName evidence="3">Pr</shortName>
        </alternativeName>
    </component>
    <component>
        <recommendedName>
            <fullName evidence="3">Assembly protein</fullName>
            <shortName evidence="3">AP</shortName>
        </recommendedName>
        <alternativeName>
            <fullName evidence="3">Capsid assembly protein</fullName>
        </alternativeName>
    </component>
</protein>
<gene>
    <name type="primary">U53</name>
</gene>
<accession>P52351</accession>
<comment type="function">
    <molecule>Capsid scaffolding protein</molecule>
    <text evidence="3">Acts as a scaffold protein by binding major capsid protein in the cytoplasm, inducing the nuclear localization of both proteins. Multimerizes in the nucleus such as major capsid protein forms the icosahedral T=16 capsid. Autocatalytic cleavage releases the assembly protein, and subsequently abolishes interaction with major capsid protein. Cleavages products are evicted from the capsid before or during DNA packaging.</text>
</comment>
<comment type="function">
    <molecule>Assemblin</molecule>
    <text evidence="3">Protease that plays an essential role in virion assembly within the nucleus. Catalyzes the cleavage of the assembly protein after formation of the spherical procapsid. By that cleavage, the capsid matures and gains its icosahedral shape. The cleavage sites seem to include -Ala-Ser-, -Ala-Ala-, as well as Ala-Thr bonds. Assemblin and cleavages products are evicted from the capsid before or during DNA packaging.</text>
</comment>
<comment type="function">
    <molecule>Assembly protein</molecule>
    <text evidence="3">Plays a major role in capsid assembly. Acts as a scaffold protein by binding major capsid protein. Multimerizes in the nucleus such as major capsid protein forms the icosahedral T=16 capsid. Cleaved by assemblin after capsid completion. The cleavages products are evicted from the capsid before or during DNA packaging.</text>
</comment>
<comment type="catalytic activity">
    <molecule>Assemblin</molecule>
    <reaction evidence="3">
        <text>Cleaves -Ala-|-Ser- and -Ala-|-Ala- bonds in the scaffold protein.</text>
        <dbReference type="EC" id="3.4.21.97"/>
    </reaction>
</comment>
<comment type="subunit">
    <molecule>Capsid scaffolding protein</molecule>
    <text evidence="3">Homomultimer. Interacts with major capsid protein.</text>
</comment>
<comment type="subunit">
    <molecule>Assemblin</molecule>
    <text evidence="3">Exists in a monomer-dimer equilibrium with the dimer being the active species.</text>
</comment>
<comment type="subunit">
    <molecule>Assembly protein</molecule>
    <text evidence="3">Homomultimer. Interacts with major capsid protein.</text>
</comment>
<comment type="subcellular location">
    <molecule>Capsid scaffolding protein</molecule>
    <subcellularLocation>
        <location evidence="3">Host cytoplasm</location>
    </subcellularLocation>
</comment>
<comment type="subcellular location">
    <molecule>Assemblin</molecule>
    <subcellularLocation>
        <location evidence="3">Host nucleus</location>
    </subcellularLocation>
</comment>
<comment type="subcellular location">
    <molecule>Assembly protein</molecule>
    <subcellularLocation>
        <location evidence="3">Host nucleus</location>
    </subcellularLocation>
</comment>
<comment type="alternative products">
    <event type="alternative promoter"/>
    <isoform>
        <id>P52351-1</id>
        <name>Capsid scaffolding protein</name>
        <name>pPR</name>
        <sequence type="displayed"/>
    </isoform>
    <isoform>
        <id>P52351-2</id>
        <name>pAP</name>
        <name>Assembly protein</name>
        <sequence type="described" ref="VSP_037419"/>
    </isoform>
</comment>
<comment type="domain">
    <text evidence="3">Region of interaction between pPR and pAP is called Amino conserved domain (ACD). The region of interaction with major capsid protein is called carboxyl conserved domain (CCD).</text>
</comment>
<comment type="PTM">
    <molecule>Capsid scaffolding protein</molecule>
    <text evidence="3">Capsid scaffolding protein is cleaved by assemblin after formation of the spherical procapsid. As a result, the capsid obtains its mature, icosahedral shape. Cleavages occur at two or more sites: release (R-site) and maturation (M-site).</text>
</comment>
<comment type="similarity">
    <text evidence="3">Belongs to the herpesviridae capsid scaffolding protein family.</text>
</comment>
<reference key="1">
    <citation type="submission" date="1996-01" db="EMBL/GenBank/DDBJ databases">
        <authorList>
            <person name="Nicholas J."/>
        </authorList>
    </citation>
    <scope>NUCLEOTIDE SEQUENCE [GENOMIC DNA]</scope>
</reference>
<dbReference type="EC" id="3.4.21.97" evidence="3"/>
<dbReference type="EMBL" id="U43400">
    <property type="protein sequence ID" value="AAC54715.1"/>
    <property type="molecule type" value="Genomic_DNA"/>
</dbReference>
<dbReference type="PIR" id="T41955">
    <property type="entry name" value="T41955"/>
</dbReference>
<dbReference type="SMR" id="P52351"/>
<dbReference type="MEROPS" id="S21.004"/>
<dbReference type="Proteomes" id="UP000009246">
    <property type="component" value="Segment"/>
</dbReference>
<dbReference type="GO" id="GO:0030430">
    <property type="term" value="C:host cell cytoplasm"/>
    <property type="evidence" value="ECO:0007669"/>
    <property type="project" value="UniProtKB-SubCell"/>
</dbReference>
<dbReference type="GO" id="GO:0042025">
    <property type="term" value="C:host cell nucleus"/>
    <property type="evidence" value="ECO:0007669"/>
    <property type="project" value="UniProtKB-SubCell"/>
</dbReference>
<dbReference type="GO" id="GO:0042802">
    <property type="term" value="F:identical protein binding"/>
    <property type="evidence" value="ECO:0007669"/>
    <property type="project" value="UniProtKB-UniRule"/>
</dbReference>
<dbReference type="GO" id="GO:0004252">
    <property type="term" value="F:serine-type endopeptidase activity"/>
    <property type="evidence" value="ECO:0007669"/>
    <property type="project" value="UniProtKB-UniRule"/>
</dbReference>
<dbReference type="GO" id="GO:0039708">
    <property type="term" value="P:nuclear capsid assembly"/>
    <property type="evidence" value="ECO:0007669"/>
    <property type="project" value="UniProtKB-ARBA"/>
</dbReference>
<dbReference type="GO" id="GO:0006508">
    <property type="term" value="P:proteolysis"/>
    <property type="evidence" value="ECO:0007669"/>
    <property type="project" value="UniProtKB-KW"/>
</dbReference>
<dbReference type="GO" id="GO:0019076">
    <property type="term" value="P:viral release from host cell"/>
    <property type="evidence" value="ECO:0007669"/>
    <property type="project" value="UniProtKB-UniRule"/>
</dbReference>
<dbReference type="Gene3D" id="3.20.16.10">
    <property type="entry name" value="Herpesvirus/Caudovirus protease domain"/>
    <property type="match status" value="1"/>
</dbReference>
<dbReference type="HAMAP" id="MF_04008">
    <property type="entry name" value="HSV_SCAF"/>
    <property type="match status" value="1"/>
</dbReference>
<dbReference type="InterPro" id="IPR035443">
    <property type="entry name" value="Herpes_virus_sf"/>
</dbReference>
<dbReference type="InterPro" id="IPR001847">
    <property type="entry name" value="Peptidase_S21"/>
</dbReference>
<dbReference type="Pfam" id="PF00716">
    <property type="entry name" value="Peptidase_S21"/>
    <property type="match status" value="1"/>
</dbReference>
<dbReference type="PRINTS" id="PR00236">
    <property type="entry name" value="HSVCAPSIDP40"/>
</dbReference>
<dbReference type="SUPFAM" id="SSF50789">
    <property type="entry name" value="Herpes virus serine proteinase, assemblin"/>
    <property type="match status" value="1"/>
</dbReference>
<keyword id="KW-0877">Alternative promoter usage</keyword>
<keyword id="KW-1035">Host cytoplasm</keyword>
<keyword id="KW-1048">Host nucleus</keyword>
<keyword id="KW-0378">Hydrolase</keyword>
<keyword id="KW-0597">Phosphoprotein</keyword>
<keyword id="KW-0645">Protease</keyword>
<keyword id="KW-1185">Reference proteome</keyword>
<keyword id="KW-0720">Serine protease</keyword>
<keyword id="KW-0118">Viral capsid assembly</keyword>
<keyword id="KW-1188">Viral release from host cell</keyword>